<dbReference type="EMBL" id="CP000107">
    <property type="protein sequence ID" value="AAZ68483.1"/>
    <property type="molecule type" value="Genomic_DNA"/>
</dbReference>
<dbReference type="RefSeq" id="WP_011304561.1">
    <property type="nucleotide sequence ID" value="NC_007354.1"/>
</dbReference>
<dbReference type="SMR" id="Q3YS22"/>
<dbReference type="FunCoup" id="Q3YS22">
    <property type="interactions" value="242"/>
</dbReference>
<dbReference type="STRING" id="269484.Ecaj_0443"/>
<dbReference type="KEGG" id="ecn:Ecaj_0443"/>
<dbReference type="eggNOG" id="COG0218">
    <property type="taxonomic scope" value="Bacteria"/>
</dbReference>
<dbReference type="HOGENOM" id="CLU_033732_2_0_5"/>
<dbReference type="InParanoid" id="Q3YS22"/>
<dbReference type="Proteomes" id="UP000000435">
    <property type="component" value="Chromosome"/>
</dbReference>
<dbReference type="GO" id="GO:0005525">
    <property type="term" value="F:GTP binding"/>
    <property type="evidence" value="ECO:0007669"/>
    <property type="project" value="UniProtKB-UniRule"/>
</dbReference>
<dbReference type="GO" id="GO:0046872">
    <property type="term" value="F:metal ion binding"/>
    <property type="evidence" value="ECO:0007669"/>
    <property type="project" value="UniProtKB-KW"/>
</dbReference>
<dbReference type="GO" id="GO:0000917">
    <property type="term" value="P:division septum assembly"/>
    <property type="evidence" value="ECO:0007669"/>
    <property type="project" value="UniProtKB-KW"/>
</dbReference>
<dbReference type="CDD" id="cd01876">
    <property type="entry name" value="YihA_EngB"/>
    <property type="match status" value="1"/>
</dbReference>
<dbReference type="Gene3D" id="3.40.50.300">
    <property type="entry name" value="P-loop containing nucleotide triphosphate hydrolases"/>
    <property type="match status" value="1"/>
</dbReference>
<dbReference type="HAMAP" id="MF_00321">
    <property type="entry name" value="GTPase_EngB"/>
    <property type="match status" value="1"/>
</dbReference>
<dbReference type="InterPro" id="IPR030393">
    <property type="entry name" value="G_ENGB_dom"/>
</dbReference>
<dbReference type="InterPro" id="IPR006073">
    <property type="entry name" value="GTP-bd"/>
</dbReference>
<dbReference type="InterPro" id="IPR019987">
    <property type="entry name" value="GTP-bd_ribosome_bio_YsxC"/>
</dbReference>
<dbReference type="InterPro" id="IPR027417">
    <property type="entry name" value="P-loop_NTPase"/>
</dbReference>
<dbReference type="NCBIfam" id="TIGR03598">
    <property type="entry name" value="GTPase_YsxC"/>
    <property type="match status" value="1"/>
</dbReference>
<dbReference type="PANTHER" id="PTHR11649:SF13">
    <property type="entry name" value="ENGB-TYPE G DOMAIN-CONTAINING PROTEIN"/>
    <property type="match status" value="1"/>
</dbReference>
<dbReference type="PANTHER" id="PTHR11649">
    <property type="entry name" value="MSS1/TRME-RELATED GTP-BINDING PROTEIN"/>
    <property type="match status" value="1"/>
</dbReference>
<dbReference type="Pfam" id="PF01926">
    <property type="entry name" value="MMR_HSR1"/>
    <property type="match status" value="1"/>
</dbReference>
<dbReference type="SUPFAM" id="SSF52540">
    <property type="entry name" value="P-loop containing nucleoside triphosphate hydrolases"/>
    <property type="match status" value="1"/>
</dbReference>
<dbReference type="PROSITE" id="PS51706">
    <property type="entry name" value="G_ENGB"/>
    <property type="match status" value="1"/>
</dbReference>
<comment type="function">
    <text evidence="1">Necessary for normal cell division and for the maintenance of normal septation.</text>
</comment>
<comment type="cofactor">
    <cofactor evidence="1">
        <name>Mg(2+)</name>
        <dbReference type="ChEBI" id="CHEBI:18420"/>
    </cofactor>
</comment>
<comment type="similarity">
    <text evidence="1">Belongs to the TRAFAC class TrmE-Era-EngA-EngB-Septin-like GTPase superfamily. EngB GTPase family.</text>
</comment>
<protein>
    <recommendedName>
        <fullName evidence="1">Probable GTP-binding protein EngB</fullName>
    </recommendedName>
</protein>
<proteinExistence type="inferred from homology"/>
<organism>
    <name type="scientific">Ehrlichia canis (strain Jake)</name>
    <dbReference type="NCBI Taxonomy" id="269484"/>
    <lineage>
        <taxon>Bacteria</taxon>
        <taxon>Pseudomonadati</taxon>
        <taxon>Pseudomonadota</taxon>
        <taxon>Alphaproteobacteria</taxon>
        <taxon>Rickettsiales</taxon>
        <taxon>Anaplasmataceae</taxon>
        <taxon>Ehrlichia</taxon>
    </lineage>
</organism>
<sequence length="200" mass="22732">MKLKAIMSKCEFIIGATHVKSFPNFSIPEIAIAGRSNVGKSSLINAITNNKKNAKTSSRPGCTKQINFYLINKSFMVLVDLPGYGYSKATRATINNYLFLMEYYLLNSKNLLKVILLIDVKVGFKEIDLDFINWLELNHIYYQLVLTKIDRVSKEILDVNINYIKNLNLGFVIYPVISASSKYKQGIGELIYEIAQCIKK</sequence>
<evidence type="ECO:0000255" key="1">
    <source>
        <dbReference type="HAMAP-Rule" id="MF_00321"/>
    </source>
</evidence>
<accession>Q3YS22</accession>
<gene>
    <name evidence="1" type="primary">engB</name>
    <name type="ordered locus">Ecaj_0443</name>
</gene>
<reference key="1">
    <citation type="journal article" date="2006" name="J. Bacteriol.">
        <title>The genome of the obligately intracellular bacterium Ehrlichia canis reveals themes of complex membrane structure and immune evasion strategies.</title>
        <authorList>
            <person name="Mavromatis K."/>
            <person name="Doyle C.K."/>
            <person name="Lykidis A."/>
            <person name="Ivanova N."/>
            <person name="Francino M.P."/>
            <person name="Chain P."/>
            <person name="Shin M."/>
            <person name="Malfatti S."/>
            <person name="Larimer F."/>
            <person name="Copeland A."/>
            <person name="Detter J.C."/>
            <person name="Land M."/>
            <person name="Richardson P.M."/>
            <person name="Yu X.J."/>
            <person name="Walker D.H."/>
            <person name="McBride J.W."/>
            <person name="Kyrpides N.C."/>
        </authorList>
    </citation>
    <scope>NUCLEOTIDE SEQUENCE [LARGE SCALE GENOMIC DNA]</scope>
    <source>
        <strain>Jake</strain>
    </source>
</reference>
<keyword id="KW-0131">Cell cycle</keyword>
<keyword id="KW-0132">Cell division</keyword>
<keyword id="KW-0342">GTP-binding</keyword>
<keyword id="KW-0460">Magnesium</keyword>
<keyword id="KW-0479">Metal-binding</keyword>
<keyword id="KW-0547">Nucleotide-binding</keyword>
<keyword id="KW-0717">Septation</keyword>
<name>ENGB_EHRCJ</name>
<feature type="chain" id="PRO_0000266854" description="Probable GTP-binding protein EngB">
    <location>
        <begin position="1"/>
        <end position="200"/>
    </location>
</feature>
<feature type="domain" description="EngB-type G" evidence="1">
    <location>
        <begin position="26"/>
        <end position="200"/>
    </location>
</feature>
<feature type="binding site" evidence="1">
    <location>
        <begin position="34"/>
        <end position="41"/>
    </location>
    <ligand>
        <name>GTP</name>
        <dbReference type="ChEBI" id="CHEBI:37565"/>
    </ligand>
</feature>
<feature type="binding site" evidence="1">
    <location>
        <position position="41"/>
    </location>
    <ligand>
        <name>Mg(2+)</name>
        <dbReference type="ChEBI" id="CHEBI:18420"/>
    </ligand>
</feature>
<feature type="binding site" evidence="1">
    <location>
        <begin position="61"/>
        <end position="65"/>
    </location>
    <ligand>
        <name>GTP</name>
        <dbReference type="ChEBI" id="CHEBI:37565"/>
    </ligand>
</feature>
<feature type="binding site" evidence="1">
    <location>
        <position position="63"/>
    </location>
    <ligand>
        <name>Mg(2+)</name>
        <dbReference type="ChEBI" id="CHEBI:18420"/>
    </ligand>
</feature>
<feature type="binding site" evidence="1">
    <location>
        <begin position="80"/>
        <end position="83"/>
    </location>
    <ligand>
        <name>GTP</name>
        <dbReference type="ChEBI" id="CHEBI:37565"/>
    </ligand>
</feature>
<feature type="binding site" evidence="1">
    <location>
        <begin position="147"/>
        <end position="150"/>
    </location>
    <ligand>
        <name>GTP</name>
        <dbReference type="ChEBI" id="CHEBI:37565"/>
    </ligand>
</feature>
<feature type="binding site" evidence="1">
    <location>
        <begin position="176"/>
        <end position="179"/>
    </location>
    <ligand>
        <name>GTP</name>
        <dbReference type="ChEBI" id="CHEBI:37565"/>
    </ligand>
</feature>